<feature type="chain" id="PRO_0000313896" description="CCR4-NOT transcription complex subunit 7">
    <location>
        <begin position="1"/>
        <end position="285"/>
    </location>
</feature>
<feature type="binding site" evidence="1">
    <location>
        <position position="40"/>
    </location>
    <ligand>
        <name>a divalent metal cation</name>
        <dbReference type="ChEBI" id="CHEBI:60240"/>
        <label>1</label>
        <note>catalytic</note>
    </ligand>
</feature>
<feature type="binding site" evidence="1">
    <location>
        <position position="40"/>
    </location>
    <ligand>
        <name>a divalent metal cation</name>
        <dbReference type="ChEBI" id="CHEBI:60240"/>
        <label>2</label>
        <note>catalytic</note>
    </ligand>
</feature>
<feature type="binding site" evidence="1">
    <location>
        <position position="42"/>
    </location>
    <ligand>
        <name>a divalent metal cation</name>
        <dbReference type="ChEBI" id="CHEBI:60240"/>
        <label>2</label>
        <note>catalytic</note>
    </ligand>
</feature>
<feature type="binding site" evidence="1">
    <location>
        <position position="161"/>
    </location>
    <ligand>
        <name>a divalent metal cation</name>
        <dbReference type="ChEBI" id="CHEBI:60240"/>
        <label>1</label>
        <note>catalytic</note>
    </ligand>
</feature>
<feature type="binding site" evidence="1">
    <location>
        <position position="230"/>
    </location>
    <ligand>
        <name>a divalent metal cation</name>
        <dbReference type="ChEBI" id="CHEBI:60240"/>
        <label>2</label>
        <note>catalytic</note>
    </ligand>
</feature>
<feature type="binding site" evidence="1">
    <location>
        <position position="278"/>
    </location>
    <ligand>
        <name>a divalent metal cation</name>
        <dbReference type="ChEBI" id="CHEBI:60240"/>
        <label>1</label>
        <note>catalytic</note>
    </ligand>
</feature>
<keyword id="KW-0963">Cytoplasm</keyword>
<keyword id="KW-0269">Exonuclease</keyword>
<keyword id="KW-0378">Hydrolase</keyword>
<keyword id="KW-0460">Magnesium</keyword>
<keyword id="KW-0479">Metal-binding</keyword>
<keyword id="KW-0540">Nuclease</keyword>
<keyword id="KW-0539">Nucleus</keyword>
<keyword id="KW-1185">Reference proteome</keyword>
<keyword id="KW-0678">Repressor</keyword>
<keyword id="KW-0694">RNA-binding</keyword>
<keyword id="KW-0943">RNA-mediated gene silencing</keyword>
<keyword id="KW-0804">Transcription</keyword>
<keyword id="KW-0805">Transcription regulation</keyword>
<keyword id="KW-0810">Translation regulation</keyword>
<proteinExistence type="evidence at protein level"/>
<reference key="1">
    <citation type="submission" date="2005-10" db="EMBL/GenBank/DDBJ databases">
        <authorList>
            <consortium name="NIH - Xenopus Gene Collection (XGC) project"/>
        </authorList>
    </citation>
    <scope>NUCLEOTIDE SEQUENCE [LARGE SCALE MRNA]</scope>
    <source>
        <tissue>Testis</tissue>
    </source>
</reference>
<reference key="2">
    <citation type="journal article" date="2010" name="J. Biol. Chem.">
        <title>Translational repression by deadenylases.</title>
        <authorList>
            <person name="Cooke A."/>
            <person name="Prigge A."/>
            <person name="Wickens M."/>
        </authorList>
    </citation>
    <scope>FUNCTION</scope>
    <scope>CATALYTIC ACTIVITY</scope>
</reference>
<name>CNOT7_XENLA</name>
<dbReference type="EC" id="3.1.13.4"/>
<dbReference type="EMBL" id="BC106339">
    <property type="protein sequence ID" value="AAI06340.1"/>
    <property type="molecule type" value="mRNA"/>
</dbReference>
<dbReference type="RefSeq" id="NP_001089689.1">
    <property type="nucleotide sequence ID" value="NM_001096220.1"/>
</dbReference>
<dbReference type="SMR" id="Q3KQ85"/>
<dbReference type="DNASU" id="734751"/>
<dbReference type="GeneID" id="734751"/>
<dbReference type="KEGG" id="xla:734751"/>
<dbReference type="AGR" id="Xenbase:XB-GENE-969328"/>
<dbReference type="CTD" id="734751"/>
<dbReference type="Xenbase" id="XB-GENE-969328">
    <property type="gene designation" value="cnot7.S"/>
</dbReference>
<dbReference type="OMA" id="IKFMMRA"/>
<dbReference type="OrthoDB" id="1164111at2759"/>
<dbReference type="Proteomes" id="UP000186698">
    <property type="component" value="Chromosome 1S"/>
</dbReference>
<dbReference type="Bgee" id="734751">
    <property type="expression patterns" value="Expressed in testis and 19 other cell types or tissues"/>
</dbReference>
<dbReference type="GO" id="GO:0030014">
    <property type="term" value="C:CCR4-NOT complex"/>
    <property type="evidence" value="ECO:0000250"/>
    <property type="project" value="UniProtKB"/>
</dbReference>
<dbReference type="GO" id="GO:0030015">
    <property type="term" value="C:CCR4-NOT core complex"/>
    <property type="evidence" value="ECO:0000318"/>
    <property type="project" value="GO_Central"/>
</dbReference>
<dbReference type="GO" id="GO:0005634">
    <property type="term" value="C:nucleus"/>
    <property type="evidence" value="ECO:0007669"/>
    <property type="project" value="UniProtKB-SubCell"/>
</dbReference>
<dbReference type="GO" id="GO:0000932">
    <property type="term" value="C:P-body"/>
    <property type="evidence" value="ECO:0000318"/>
    <property type="project" value="GO_Central"/>
</dbReference>
<dbReference type="GO" id="GO:0000175">
    <property type="term" value="F:3'-5'-RNA exonuclease activity"/>
    <property type="evidence" value="ECO:0000250"/>
    <property type="project" value="UniProtKB"/>
</dbReference>
<dbReference type="GO" id="GO:0046872">
    <property type="term" value="F:metal ion binding"/>
    <property type="evidence" value="ECO:0007669"/>
    <property type="project" value="UniProtKB-KW"/>
</dbReference>
<dbReference type="GO" id="GO:0004535">
    <property type="term" value="F:poly(A)-specific ribonuclease activity"/>
    <property type="evidence" value="ECO:0000250"/>
    <property type="project" value="UniProtKB"/>
</dbReference>
<dbReference type="GO" id="GO:0003723">
    <property type="term" value="F:RNA binding"/>
    <property type="evidence" value="ECO:0007669"/>
    <property type="project" value="UniProtKB-KW"/>
</dbReference>
<dbReference type="GO" id="GO:0004532">
    <property type="term" value="F:RNA exonuclease activity"/>
    <property type="evidence" value="ECO:0000250"/>
    <property type="project" value="UniProtKB"/>
</dbReference>
<dbReference type="GO" id="GO:0035279">
    <property type="term" value="P:miRNA-mediated gene silencing by mRNA destabilization"/>
    <property type="evidence" value="ECO:0000250"/>
    <property type="project" value="UniProtKB"/>
</dbReference>
<dbReference type="GO" id="GO:0008285">
    <property type="term" value="P:negative regulation of cell population proliferation"/>
    <property type="evidence" value="ECO:0000250"/>
    <property type="project" value="UniProtKB"/>
</dbReference>
<dbReference type="GO" id="GO:0000288">
    <property type="term" value="P:nuclear-transcribed mRNA catabolic process, deadenylation-dependent decay"/>
    <property type="evidence" value="ECO:0000318"/>
    <property type="project" value="GO_Central"/>
</dbReference>
<dbReference type="GO" id="GO:0008284">
    <property type="term" value="P:positive regulation of cell population proliferation"/>
    <property type="evidence" value="ECO:0000250"/>
    <property type="project" value="UniProtKB"/>
</dbReference>
<dbReference type="GO" id="GO:1900153">
    <property type="term" value="P:positive regulation of nuclear-transcribed mRNA catabolic process, deadenylation-dependent decay"/>
    <property type="evidence" value="ECO:0000250"/>
    <property type="project" value="UniProtKB"/>
</dbReference>
<dbReference type="GO" id="GO:0060213">
    <property type="term" value="P:positive regulation of nuclear-transcribed mRNA poly(A) tail shortening"/>
    <property type="evidence" value="ECO:0000250"/>
    <property type="project" value="UniProtKB"/>
</dbReference>
<dbReference type="GO" id="GO:0006417">
    <property type="term" value="P:regulation of translation"/>
    <property type="evidence" value="ECO:0007669"/>
    <property type="project" value="UniProtKB-KW"/>
</dbReference>
<dbReference type="GO" id="GO:0031047">
    <property type="term" value="P:regulatory ncRNA-mediated gene silencing"/>
    <property type="evidence" value="ECO:0000250"/>
    <property type="project" value="UniProtKB"/>
</dbReference>
<dbReference type="FunFam" id="3.30.420.10:FF:000005">
    <property type="entry name" value="CCR4-NOT transcription complex subunit 7"/>
    <property type="match status" value="1"/>
</dbReference>
<dbReference type="Gene3D" id="3.30.420.10">
    <property type="entry name" value="Ribonuclease H-like superfamily/Ribonuclease H"/>
    <property type="match status" value="1"/>
</dbReference>
<dbReference type="InterPro" id="IPR039637">
    <property type="entry name" value="CNOT7/CNOT8/Pop2"/>
</dbReference>
<dbReference type="InterPro" id="IPR006941">
    <property type="entry name" value="RNase_CAF1"/>
</dbReference>
<dbReference type="InterPro" id="IPR012337">
    <property type="entry name" value="RNaseH-like_sf"/>
</dbReference>
<dbReference type="InterPro" id="IPR036397">
    <property type="entry name" value="RNaseH_sf"/>
</dbReference>
<dbReference type="PANTHER" id="PTHR10797">
    <property type="entry name" value="CCR4-NOT TRANSCRIPTION COMPLEX SUBUNIT"/>
    <property type="match status" value="1"/>
</dbReference>
<dbReference type="Pfam" id="PF04857">
    <property type="entry name" value="CAF1"/>
    <property type="match status" value="2"/>
</dbReference>
<dbReference type="SUPFAM" id="SSF53098">
    <property type="entry name" value="Ribonuclease H-like"/>
    <property type="match status" value="1"/>
</dbReference>
<evidence type="ECO:0000250" key="1"/>
<evidence type="ECO:0000250" key="2">
    <source>
        <dbReference type="UniProtKB" id="Q9UIV1"/>
    </source>
</evidence>
<evidence type="ECO:0000269" key="3">
    <source>
    </source>
</evidence>
<evidence type="ECO:0000305" key="4"/>
<protein>
    <recommendedName>
        <fullName>CCR4-NOT transcription complex subunit 7</fullName>
        <ecNumber>3.1.13.4</ecNumber>
    </recommendedName>
    <alternativeName>
        <fullName>CCR4-associated factor 1</fullName>
        <shortName>CAF-1</shortName>
    </alternativeName>
</protein>
<comment type="function">
    <text evidence="3">Has 3'-5' poly(A) exoribonuclease activity for synthetic poly(A) RNA substrate. Catalytic component of the CCR4-NOT complex which is one of the major cellular mRNA deadenylases and is linked to various cellular processes including bulk mRNA degradation, miRNA-mediated repression, translational repression during translational initiation and general transcription regulation. During miRNA-mediated repression the complex also seems to act as translational repressor during translational initiation. Additional complex functions may be a consequence of its influence on mRNA expression.</text>
</comment>
<comment type="catalytic activity">
    <reaction evidence="3">
        <text>Exonucleolytic cleavage of poly(A) to 5'-AMP.</text>
        <dbReference type="EC" id="3.1.13.4"/>
    </reaction>
</comment>
<comment type="cofactor">
    <cofactor evidence="2">
        <name>Mn(2+)</name>
        <dbReference type="ChEBI" id="CHEBI:29035"/>
    </cofactor>
    <cofactor evidence="2">
        <name>Mg(2+)</name>
        <dbReference type="ChEBI" id="CHEBI:18420"/>
    </cofactor>
    <cofactor evidence="2">
        <name>Co(2+)</name>
        <dbReference type="ChEBI" id="CHEBI:48828"/>
    </cofactor>
    <text evidence="2">Binds 2 divalent metal cations per subunit with RNAase activity being higher in presence of Mn(2+) than of Mg(2+) or Co(2+).</text>
</comment>
<comment type="subunit">
    <text evidence="1">Component of the CCR4-NOT complex.</text>
</comment>
<comment type="subcellular location">
    <subcellularLocation>
        <location evidence="1">Nucleus</location>
    </subcellularLocation>
    <subcellularLocation>
        <location evidence="4">Cytoplasm</location>
    </subcellularLocation>
</comment>
<comment type="similarity">
    <text evidence="4">Belongs to the CAF1 family.</text>
</comment>
<organism>
    <name type="scientific">Xenopus laevis</name>
    <name type="common">African clawed frog</name>
    <dbReference type="NCBI Taxonomy" id="8355"/>
    <lineage>
        <taxon>Eukaryota</taxon>
        <taxon>Metazoa</taxon>
        <taxon>Chordata</taxon>
        <taxon>Craniata</taxon>
        <taxon>Vertebrata</taxon>
        <taxon>Euteleostomi</taxon>
        <taxon>Amphibia</taxon>
        <taxon>Batrachia</taxon>
        <taxon>Anura</taxon>
        <taxon>Pipoidea</taxon>
        <taxon>Pipidae</taxon>
        <taxon>Xenopodinae</taxon>
        <taxon>Xenopus</taxon>
        <taxon>Xenopus</taxon>
    </lineage>
</organism>
<gene>
    <name type="primary">cnot7</name>
    <name type="synonym">caf1</name>
</gene>
<sequence length="285" mass="32763">MPAATVDHSQRICEVWACNLDDQMKRIRQVIRKYNYVAMDTEFPGVVARPIGEFRSNADYQYQLLRCNVDLLKIIQLGLTFMNEQGEYPPGTSTWQFNFKFNLTEDMYAQDSIELLTSSGIQFKKHEEEGIETQYFAELFMTSGVVLCEGVKWLSFHSGYDFGYLIKILTNSNLPEVEQDFFEILRLFFPVIYDVKYLMKSCKNLKGGLQEVAEQLELERIGPQHQAGSDSLLTGMAFFKMREMFFEDHIDDAKYCGHLYGLGSGSSYVQNGTGNAYEEEANKQS</sequence>
<accession>Q3KQ85</accession>